<dbReference type="EC" id="1.14.-.-" evidence="1"/>
<dbReference type="EMBL" id="BA000032">
    <property type="protein sequence ID" value="BAC62940.1"/>
    <property type="molecule type" value="Genomic_DNA"/>
</dbReference>
<dbReference type="RefSeq" id="NP_801107.1">
    <property type="nucleotide sequence ID" value="NC_004605.1"/>
</dbReference>
<dbReference type="RefSeq" id="WP_005480142.1">
    <property type="nucleotide sequence ID" value="NC_004605.1"/>
</dbReference>
<dbReference type="SMR" id="Q87FT1"/>
<dbReference type="GeneID" id="1192293"/>
<dbReference type="KEGG" id="vpa:VPA1597"/>
<dbReference type="PATRIC" id="fig|223926.6.peg.4517"/>
<dbReference type="eggNOG" id="COG1054">
    <property type="taxonomic scope" value="Bacteria"/>
</dbReference>
<dbReference type="HOGENOM" id="CLU_038878_0_0_6"/>
<dbReference type="Proteomes" id="UP000002493">
    <property type="component" value="Chromosome 2"/>
</dbReference>
<dbReference type="GO" id="GO:0016705">
    <property type="term" value="F:oxidoreductase activity, acting on paired donors, with incorporation or reduction of molecular oxygen"/>
    <property type="evidence" value="ECO:0007669"/>
    <property type="project" value="UniProtKB-UniRule"/>
</dbReference>
<dbReference type="GO" id="GO:0006400">
    <property type="term" value="P:tRNA modification"/>
    <property type="evidence" value="ECO:0007669"/>
    <property type="project" value="UniProtKB-UniRule"/>
</dbReference>
<dbReference type="CDD" id="cd01518">
    <property type="entry name" value="RHOD_YceA"/>
    <property type="match status" value="1"/>
</dbReference>
<dbReference type="Gene3D" id="3.30.70.100">
    <property type="match status" value="1"/>
</dbReference>
<dbReference type="Gene3D" id="3.40.250.10">
    <property type="entry name" value="Rhodanese-like domain"/>
    <property type="match status" value="1"/>
</dbReference>
<dbReference type="HAMAP" id="MF_00469">
    <property type="entry name" value="TrhO"/>
    <property type="match status" value="1"/>
</dbReference>
<dbReference type="InterPro" id="IPR001763">
    <property type="entry name" value="Rhodanese-like_dom"/>
</dbReference>
<dbReference type="InterPro" id="IPR036873">
    <property type="entry name" value="Rhodanese-like_dom_sf"/>
</dbReference>
<dbReference type="InterPro" id="IPR020936">
    <property type="entry name" value="TrhO"/>
</dbReference>
<dbReference type="InterPro" id="IPR040503">
    <property type="entry name" value="TRHO_N"/>
</dbReference>
<dbReference type="NCBIfam" id="NF001136">
    <property type="entry name" value="PRK00142.1-4"/>
    <property type="match status" value="1"/>
</dbReference>
<dbReference type="PANTHER" id="PTHR43268:SF3">
    <property type="entry name" value="RHODANESE-LIKE DOMAIN-CONTAINING PROTEIN 7-RELATED"/>
    <property type="match status" value="1"/>
</dbReference>
<dbReference type="PANTHER" id="PTHR43268">
    <property type="entry name" value="THIOSULFATE SULFURTRANSFERASE/RHODANESE-LIKE DOMAIN-CONTAINING PROTEIN 2"/>
    <property type="match status" value="1"/>
</dbReference>
<dbReference type="Pfam" id="PF00581">
    <property type="entry name" value="Rhodanese"/>
    <property type="match status" value="1"/>
</dbReference>
<dbReference type="Pfam" id="PF17773">
    <property type="entry name" value="UPF0176_N"/>
    <property type="match status" value="1"/>
</dbReference>
<dbReference type="SMART" id="SM00450">
    <property type="entry name" value="RHOD"/>
    <property type="match status" value="1"/>
</dbReference>
<dbReference type="SUPFAM" id="SSF52821">
    <property type="entry name" value="Rhodanese/Cell cycle control phosphatase"/>
    <property type="match status" value="1"/>
</dbReference>
<dbReference type="PROSITE" id="PS50206">
    <property type="entry name" value="RHODANESE_3"/>
    <property type="match status" value="1"/>
</dbReference>
<accession>Q87FT1</accession>
<gene>
    <name evidence="1" type="primary">trhO</name>
    <name type="ordered locus">VPA1597</name>
</gene>
<proteinExistence type="inferred from homology"/>
<reference key="1">
    <citation type="journal article" date="2003" name="Lancet">
        <title>Genome sequence of Vibrio parahaemolyticus: a pathogenic mechanism distinct from that of V. cholerae.</title>
        <authorList>
            <person name="Makino K."/>
            <person name="Oshima K."/>
            <person name="Kurokawa K."/>
            <person name="Yokoyama K."/>
            <person name="Uda T."/>
            <person name="Tagomori K."/>
            <person name="Iijima Y."/>
            <person name="Najima M."/>
            <person name="Nakano M."/>
            <person name="Yamashita A."/>
            <person name="Kubota Y."/>
            <person name="Kimura S."/>
            <person name="Yasunaga T."/>
            <person name="Honda T."/>
            <person name="Shinagawa H."/>
            <person name="Hattori M."/>
            <person name="Iida T."/>
        </authorList>
    </citation>
    <scope>NUCLEOTIDE SEQUENCE [LARGE SCALE GENOMIC DNA]</scope>
    <source>
        <strain>RIMD 2210633</strain>
    </source>
</reference>
<feature type="chain" id="PRO_0000161535" description="tRNA uridine(34) hydroxylase">
    <location>
        <begin position="1"/>
        <end position="326"/>
    </location>
</feature>
<feature type="domain" description="Rhodanese" evidence="1">
    <location>
        <begin position="123"/>
        <end position="217"/>
    </location>
</feature>
<feature type="region of interest" description="Disordered" evidence="2">
    <location>
        <begin position="278"/>
        <end position="326"/>
    </location>
</feature>
<feature type="compositionally biased region" description="Basic and acidic residues" evidence="2">
    <location>
        <begin position="278"/>
        <end position="288"/>
    </location>
</feature>
<feature type="compositionally biased region" description="Basic residues" evidence="2">
    <location>
        <begin position="317"/>
        <end position="326"/>
    </location>
</feature>
<feature type="active site" description="Cysteine persulfide intermediate" evidence="1">
    <location>
        <position position="177"/>
    </location>
</feature>
<keyword id="KW-0560">Oxidoreductase</keyword>
<keyword id="KW-0819">tRNA processing</keyword>
<organism>
    <name type="scientific">Vibrio parahaemolyticus serotype O3:K6 (strain RIMD 2210633)</name>
    <dbReference type="NCBI Taxonomy" id="223926"/>
    <lineage>
        <taxon>Bacteria</taxon>
        <taxon>Pseudomonadati</taxon>
        <taxon>Pseudomonadota</taxon>
        <taxon>Gammaproteobacteria</taxon>
        <taxon>Vibrionales</taxon>
        <taxon>Vibrionaceae</taxon>
        <taxon>Vibrio</taxon>
    </lineage>
</organism>
<comment type="function">
    <text evidence="1">Catalyzes oxygen-dependent 5-hydroxyuridine (ho5U) modification at position 34 in tRNAs.</text>
</comment>
<comment type="catalytic activity">
    <reaction evidence="1">
        <text>uridine(34) in tRNA + AH2 + O2 = 5-hydroxyuridine(34) in tRNA + A + H2O</text>
        <dbReference type="Rhea" id="RHEA:64224"/>
        <dbReference type="Rhea" id="RHEA-COMP:11727"/>
        <dbReference type="Rhea" id="RHEA-COMP:13381"/>
        <dbReference type="ChEBI" id="CHEBI:13193"/>
        <dbReference type="ChEBI" id="CHEBI:15377"/>
        <dbReference type="ChEBI" id="CHEBI:15379"/>
        <dbReference type="ChEBI" id="CHEBI:17499"/>
        <dbReference type="ChEBI" id="CHEBI:65315"/>
        <dbReference type="ChEBI" id="CHEBI:136877"/>
    </reaction>
</comment>
<comment type="similarity">
    <text evidence="1">Belongs to the TrhO family.</text>
</comment>
<sequence>MSQYVVCALYKFVELNNYQELREPLLALMEKHHIRGTLLLAGEGINGTVASDRAGIDTLLEWLNTEPRLTGTVYKESYSETQPFNRTKVKLKKEIVTLGVEGIDPRHVVGTYVKPQDWNDLIADPEVFVVDTRNDYEIEIGTFKGAVNPNTETFREFPDYVKENMDPAKHKKVAMFCTGGIRCEKSTAYMKEQGFEEVYHLEGGILKYLEEVPQEESMWEGDCYVFDGRVAVNHQLEKADYDLCNACRLPITDEDKQSELFEQGVSCPKCHGKHSEEQVERFREREKQVSLANQRGEQHVGGESAKQRAQRREAKLAKKAAQRKQA</sequence>
<name>TRHO_VIBPA</name>
<evidence type="ECO:0000255" key="1">
    <source>
        <dbReference type="HAMAP-Rule" id="MF_00469"/>
    </source>
</evidence>
<evidence type="ECO:0000256" key="2">
    <source>
        <dbReference type="SAM" id="MobiDB-lite"/>
    </source>
</evidence>
<protein>
    <recommendedName>
        <fullName evidence="1">tRNA uridine(34) hydroxylase</fullName>
        <ecNumber evidence="1">1.14.-.-</ecNumber>
    </recommendedName>
    <alternativeName>
        <fullName evidence="1">tRNA hydroxylation protein O</fullName>
    </alternativeName>
</protein>